<dbReference type="EMBL" id="AY653733">
    <property type="protein sequence ID" value="AAV50679.1"/>
    <property type="molecule type" value="Genomic_DNA"/>
</dbReference>
<dbReference type="KEGG" id="vg:9925031"/>
<dbReference type="OrthoDB" id="2542at10239"/>
<dbReference type="Proteomes" id="UP000001134">
    <property type="component" value="Genome"/>
</dbReference>
<dbReference type="GO" id="GO:0044423">
    <property type="term" value="C:virion component"/>
    <property type="evidence" value="ECO:0007669"/>
    <property type="project" value="UniProtKB-KW"/>
</dbReference>
<dbReference type="InterPro" id="IPR004972">
    <property type="entry name" value="P4B"/>
</dbReference>
<dbReference type="Pfam" id="PF03292">
    <property type="entry name" value="Pox_P4B"/>
    <property type="match status" value="1"/>
</dbReference>
<keyword id="KW-0175">Coiled coil</keyword>
<keyword id="KW-1185">Reference proteome</keyword>
<keyword id="KW-0946">Virion</keyword>
<reference key="1">
    <citation type="journal article" date="2004" name="Science">
        <title>The 1.2-megabase genome sequence of Mimivirus.</title>
        <authorList>
            <person name="Raoult D."/>
            <person name="Audic S."/>
            <person name="Robert C."/>
            <person name="Abergel C."/>
            <person name="Renesto P."/>
            <person name="Ogata H."/>
            <person name="La Scola B."/>
            <person name="Susan M."/>
            <person name="Claverie J.-M."/>
        </authorList>
    </citation>
    <scope>NUCLEOTIDE SEQUENCE [LARGE SCALE GENOMIC DNA]</scope>
    <source>
        <strain>Rowbotham-Bradford</strain>
    </source>
</reference>
<reference key="2">
    <citation type="journal article" date="2006" name="J. Virol.">
        <title>Mimivirus giant particles incorporate a large fraction of anonymous and unique gene products.</title>
        <authorList>
            <person name="Renesto P."/>
            <person name="Abergel C."/>
            <person name="Decloquement P."/>
            <person name="Moinier D."/>
            <person name="Azza S."/>
            <person name="Ogata H."/>
            <person name="Fourquet P."/>
            <person name="Gorvel J.-P."/>
            <person name="Claverie J.-M."/>
            <person name="Raoult D."/>
        </authorList>
    </citation>
    <scope>IDENTIFICATION BY MASS SPECTROMETRY [LARGE SCALE ANALYSIS]</scope>
    <scope>SUBCELLULAR LOCATION</scope>
</reference>
<organismHost>
    <name type="scientific">Acanthamoeba polyphaga</name>
    <name type="common">Amoeba</name>
    <dbReference type="NCBI Taxonomy" id="5757"/>
</organismHost>
<feature type="chain" id="PRO_0000247295" description="Putative core protein L410">
    <location>
        <begin position="1"/>
        <end position="661"/>
    </location>
</feature>
<feature type="region of interest" description="Disordered" evidence="2">
    <location>
        <begin position="1"/>
        <end position="26"/>
    </location>
</feature>
<feature type="coiled-coil region" evidence="1">
    <location>
        <begin position="112"/>
        <end position="140"/>
    </location>
</feature>
<feature type="compositionally biased region" description="Basic and acidic residues" evidence="2">
    <location>
        <begin position="1"/>
        <end position="11"/>
    </location>
</feature>
<feature type="compositionally biased region" description="Polar residues" evidence="2">
    <location>
        <begin position="15"/>
        <end position="25"/>
    </location>
</feature>
<evidence type="ECO:0000255" key="1"/>
<evidence type="ECO:0000256" key="2">
    <source>
        <dbReference type="SAM" id="MobiDB-lite"/>
    </source>
</evidence>
<evidence type="ECO:0000269" key="3">
    <source>
    </source>
</evidence>
<protein>
    <recommendedName>
        <fullName>Putative core protein L410</fullName>
    </recommendedName>
</protein>
<sequence>MADNKGRRDTFDVSGDTNTNATSNKRSIEDKIEADLDKIMKKGSFTPADALELYNKYGDENEYLVDKILKMNSKKNLKIRKQARLLAEKIYQRYNNGTKPLHEILEKMLKYKKENKWSDKEYDEFRKELTNLLTGNRALEIDYNQNLTSYKSRINRALGGIKNEEVIRQADSGLRIKDSEKGVLQDILNMYDRTANLHRTVFMHSLMYEDCSLVAITGEFDRKRHLATNYIDPILACMFIPKIDIFEIHMLYANFGSIIKARSERKQITNEPDLLLYYDITSDPNDVVCEINSPIADLRNRYRVQIALWGIVMKLRNGNYYDSEAMDDFSKTLDACRNNLYDNADLAYNNDEGAIMRRLLSVFSLRPTIIVTKPVYSIASFAMGQLMPQLIMGANGVPSPFGQSMNPFNNQPIYTITSIPMITLQIPPITDNAEPIDLRSATTQTLWVNENKTIIPKEQSIIYSKEVLIFYINRRIQRIQLKTFSNPLSFSQLPLTMSSFERLNGYPVHVPDRLVLDRGDEVYNLRSVVSVTETKIGGLSTSLVEGLPSNSILGQNSQSTGIITGRTGLITKPRNFETGVFEPEYYLYDPFGASLPVRHPDQSGYFTNKPISHIPPLYSPSVDLTGGIENPSFFDRASRTGTIFIYAKPQGYNPNQPLSLF</sequence>
<name>YL410_MIMIV</name>
<organism>
    <name type="scientific">Acanthamoeba polyphaga mimivirus</name>
    <name type="common">APMV</name>
    <dbReference type="NCBI Taxonomy" id="212035"/>
    <lineage>
        <taxon>Viruses</taxon>
        <taxon>Varidnaviria</taxon>
        <taxon>Bamfordvirae</taxon>
        <taxon>Nucleocytoviricota</taxon>
        <taxon>Megaviricetes</taxon>
        <taxon>Imitervirales</taxon>
        <taxon>Mimiviridae</taxon>
        <taxon>Megamimivirinae</taxon>
        <taxon>Mimivirus</taxon>
        <taxon>Mimivirus bradfordmassiliense</taxon>
    </lineage>
</organism>
<gene>
    <name type="ordered locus">MIMI_L410</name>
</gene>
<proteinExistence type="evidence at protein level"/>
<accession>Q5UQL0</accession>
<comment type="subcellular location">
    <subcellularLocation>
        <location evidence="3">Virion</location>
    </subcellularLocation>
</comment>